<keyword id="KW-0687">Ribonucleoprotein</keyword>
<keyword id="KW-0689">Ribosomal protein</keyword>
<organism>
    <name type="scientific">Dehalococcoides mccartyi (strain ATCC BAA-2100 / JCM 16839 / KCTC 5957 / BAV1)</name>
    <dbReference type="NCBI Taxonomy" id="216389"/>
    <lineage>
        <taxon>Bacteria</taxon>
        <taxon>Bacillati</taxon>
        <taxon>Chloroflexota</taxon>
        <taxon>Dehalococcoidia</taxon>
        <taxon>Dehalococcoidales</taxon>
        <taxon>Dehalococcoidaceae</taxon>
        <taxon>Dehalococcoides</taxon>
    </lineage>
</organism>
<reference key="1">
    <citation type="submission" date="2007-05" db="EMBL/GenBank/DDBJ databases">
        <title>Complete sequence of Dehalococcoides sp. BAV1.</title>
        <authorList>
            <consortium name="US DOE Joint Genome Institute"/>
            <person name="Copeland A."/>
            <person name="Lucas S."/>
            <person name="Lapidus A."/>
            <person name="Barry K."/>
            <person name="Detter J.C."/>
            <person name="Glavina del Rio T."/>
            <person name="Hammon N."/>
            <person name="Israni S."/>
            <person name="Pitluck S."/>
            <person name="Lowry S."/>
            <person name="Clum A."/>
            <person name="Schmutz J."/>
            <person name="Larimer F."/>
            <person name="Land M."/>
            <person name="Hauser L."/>
            <person name="Kyrpides N."/>
            <person name="Kim E."/>
            <person name="Ritalahti K.M."/>
            <person name="Loeffler F."/>
            <person name="Richardson P."/>
        </authorList>
    </citation>
    <scope>NUCLEOTIDE SEQUENCE [LARGE SCALE GENOMIC DNA]</scope>
    <source>
        <strain>ATCC BAA-2100 / JCM 16839 / KCTC 5957 / BAV1</strain>
    </source>
</reference>
<gene>
    <name evidence="1" type="primary">rpsB</name>
    <name type="ordered locus">DehaBAV1_0359</name>
</gene>
<feature type="chain" id="PRO_1000078878" description="Small ribosomal subunit protein uS2">
    <location>
        <begin position="1"/>
        <end position="245"/>
    </location>
</feature>
<evidence type="ECO:0000255" key="1">
    <source>
        <dbReference type="HAMAP-Rule" id="MF_00291"/>
    </source>
</evidence>
<evidence type="ECO:0000305" key="2"/>
<dbReference type="EMBL" id="CP000688">
    <property type="protein sequence ID" value="ABQ16944.1"/>
    <property type="molecule type" value="Genomic_DNA"/>
</dbReference>
<dbReference type="SMR" id="A5FS79"/>
<dbReference type="KEGG" id="deb:DehaBAV1_0359"/>
<dbReference type="PATRIC" id="fig|216389.18.peg.398"/>
<dbReference type="HOGENOM" id="CLU_040318_1_2_0"/>
<dbReference type="GO" id="GO:0022627">
    <property type="term" value="C:cytosolic small ribosomal subunit"/>
    <property type="evidence" value="ECO:0007669"/>
    <property type="project" value="TreeGrafter"/>
</dbReference>
<dbReference type="GO" id="GO:0003735">
    <property type="term" value="F:structural constituent of ribosome"/>
    <property type="evidence" value="ECO:0007669"/>
    <property type="project" value="InterPro"/>
</dbReference>
<dbReference type="GO" id="GO:0006412">
    <property type="term" value="P:translation"/>
    <property type="evidence" value="ECO:0007669"/>
    <property type="project" value="UniProtKB-UniRule"/>
</dbReference>
<dbReference type="CDD" id="cd01425">
    <property type="entry name" value="RPS2"/>
    <property type="match status" value="1"/>
</dbReference>
<dbReference type="Gene3D" id="3.40.50.10490">
    <property type="entry name" value="Glucose-6-phosphate isomerase like protein, domain 1"/>
    <property type="match status" value="1"/>
</dbReference>
<dbReference type="Gene3D" id="1.10.287.610">
    <property type="entry name" value="Helix hairpin bin"/>
    <property type="match status" value="1"/>
</dbReference>
<dbReference type="HAMAP" id="MF_00291_B">
    <property type="entry name" value="Ribosomal_uS2_B"/>
    <property type="match status" value="1"/>
</dbReference>
<dbReference type="InterPro" id="IPR001865">
    <property type="entry name" value="Ribosomal_uS2"/>
</dbReference>
<dbReference type="InterPro" id="IPR005706">
    <property type="entry name" value="Ribosomal_uS2_bac/mit/plastid"/>
</dbReference>
<dbReference type="InterPro" id="IPR018130">
    <property type="entry name" value="Ribosomal_uS2_CS"/>
</dbReference>
<dbReference type="InterPro" id="IPR023591">
    <property type="entry name" value="Ribosomal_uS2_flav_dom_sf"/>
</dbReference>
<dbReference type="NCBIfam" id="TIGR01011">
    <property type="entry name" value="rpsB_bact"/>
    <property type="match status" value="1"/>
</dbReference>
<dbReference type="PANTHER" id="PTHR12534">
    <property type="entry name" value="30S RIBOSOMAL PROTEIN S2 PROKARYOTIC AND ORGANELLAR"/>
    <property type="match status" value="1"/>
</dbReference>
<dbReference type="PANTHER" id="PTHR12534:SF0">
    <property type="entry name" value="SMALL RIBOSOMAL SUBUNIT PROTEIN US2M"/>
    <property type="match status" value="1"/>
</dbReference>
<dbReference type="Pfam" id="PF00318">
    <property type="entry name" value="Ribosomal_S2"/>
    <property type="match status" value="1"/>
</dbReference>
<dbReference type="PRINTS" id="PR00395">
    <property type="entry name" value="RIBOSOMALS2"/>
</dbReference>
<dbReference type="SUPFAM" id="SSF52313">
    <property type="entry name" value="Ribosomal protein S2"/>
    <property type="match status" value="1"/>
</dbReference>
<dbReference type="PROSITE" id="PS00962">
    <property type="entry name" value="RIBOSOMAL_S2_1"/>
    <property type="match status" value="1"/>
</dbReference>
<dbReference type="PROSITE" id="PS00963">
    <property type="entry name" value="RIBOSOMAL_S2_2"/>
    <property type="match status" value="1"/>
</dbReference>
<sequence length="245" mass="27531">MPTTNIKELLEAGAHFGHQTSRWHPRMKKYIFTKRNGIHIIDLEKTVVMLDKACNYINQVVSDGGKVLFVGTKKQAQEILAEEAKRCGMYFINQRWTGGILTNFHSIQSRIDYLVRLEDQQARGDFSRLPKKEAQKLGEEIARLNRTMGGFKEMTRLPDVIFVVDPIKEKIAMAEAKRMGVPLVAMVDTNCNPDEVDYPVPSNDDAMRAIKLICSKMADAVIEAQNAMKVTEVETTGEAQAETAG</sequence>
<proteinExistence type="inferred from homology"/>
<comment type="similarity">
    <text evidence="1">Belongs to the universal ribosomal protein uS2 family.</text>
</comment>
<accession>A5FS79</accession>
<name>RS2_DEHMB</name>
<protein>
    <recommendedName>
        <fullName evidence="1">Small ribosomal subunit protein uS2</fullName>
    </recommendedName>
    <alternativeName>
        <fullName evidence="2">30S ribosomal protein S2</fullName>
    </alternativeName>
</protein>